<comment type="function">
    <text>Acts as a pheromone, induces cells to develop competence for genetic transformation.</text>
</comment>
<comment type="subcellular location">
    <subcellularLocation>
        <location>Secreted</location>
    </subcellularLocation>
</comment>
<comment type="similarity">
    <text evidence="2">Belongs to the ComC family.</text>
</comment>
<feature type="propeptide" id="PRO_0000005869" evidence="1">
    <location>
        <begin position="1"/>
        <end position="24"/>
    </location>
</feature>
<feature type="peptide" id="PRO_0000005870" description="Competence-stimulating peptide">
    <location>
        <begin position="25"/>
        <end position="41"/>
    </location>
</feature>
<name>CSP1_STRMT</name>
<evidence type="ECO:0000255" key="1"/>
<evidence type="ECO:0000305" key="2"/>
<proteinExistence type="inferred from homology"/>
<accession>O33672</accession>
<reference key="1">
    <citation type="journal article" date="1997" name="J. Bacteriol.">
        <title>Natural competence in the genus Streptococcus: evidence that streptococci can change pherotype by interspecies recombinational exchanges.</title>
        <authorList>
            <person name="Haevarstein L.S."/>
            <person name="Hakenbeck R."/>
            <person name="Gaustad P."/>
        </authorList>
    </citation>
    <scope>NUCLEOTIDE SEQUENCE [GENOMIC DNA]</scope>
    <source>
        <strain>B5</strain>
    </source>
</reference>
<gene>
    <name type="primary">comC</name>
</gene>
<organism>
    <name type="scientific">Streptococcus mitis</name>
    <dbReference type="NCBI Taxonomy" id="28037"/>
    <lineage>
        <taxon>Bacteria</taxon>
        <taxon>Bacillati</taxon>
        <taxon>Bacillota</taxon>
        <taxon>Bacilli</taxon>
        <taxon>Lactobacillales</taxon>
        <taxon>Streptococcaceae</taxon>
        <taxon>Streptococcus</taxon>
        <taxon>Streptococcus mitis group</taxon>
    </lineage>
</organism>
<protein>
    <recommendedName>
        <fullName>Competence-stimulating peptide</fullName>
        <shortName>CSP</shortName>
    </recommendedName>
</protein>
<keyword id="KW-0178">Competence</keyword>
<keyword id="KW-0588">Pheromone</keyword>
<keyword id="KW-0964">Secreted</keyword>
<dbReference type="EMBL" id="AJ000871">
    <property type="protein sequence ID" value="CAA04359.1"/>
    <property type="molecule type" value="Genomic_DNA"/>
</dbReference>
<dbReference type="SMR" id="O33672"/>
<dbReference type="GO" id="GO:0005576">
    <property type="term" value="C:extracellular region"/>
    <property type="evidence" value="ECO:0007669"/>
    <property type="project" value="UniProtKB-SubCell"/>
</dbReference>
<dbReference type="GO" id="GO:0005186">
    <property type="term" value="F:pheromone activity"/>
    <property type="evidence" value="ECO:0007669"/>
    <property type="project" value="UniProtKB-KW"/>
</dbReference>
<dbReference type="GO" id="GO:0030420">
    <property type="term" value="P:establishment of competence for transformation"/>
    <property type="evidence" value="ECO:0007669"/>
    <property type="project" value="UniProtKB-KW"/>
</dbReference>
<dbReference type="InterPro" id="IPR004288">
    <property type="entry name" value="Competence_ComC"/>
</dbReference>
<dbReference type="NCBIfam" id="NF033214">
    <property type="entry name" value="ComC_Streptocco"/>
    <property type="match status" value="1"/>
</dbReference>
<dbReference type="Pfam" id="PF03047">
    <property type="entry name" value="ComC"/>
    <property type="match status" value="1"/>
</dbReference>
<sequence>MKNTVKLEQFVALKEKDLQKIKGGESRLPKIRFDFIFPRKK</sequence>